<evidence type="ECO:0000255" key="1">
    <source>
        <dbReference type="HAMAP-Rule" id="MF_00054"/>
    </source>
</evidence>
<feature type="chain" id="PRO_0000263488" description="Elongation factor G 2">
    <location>
        <begin position="1"/>
        <end position="702"/>
    </location>
</feature>
<feature type="domain" description="tr-type G">
    <location>
        <begin position="8"/>
        <end position="290"/>
    </location>
</feature>
<feature type="binding site" evidence="1">
    <location>
        <begin position="17"/>
        <end position="24"/>
    </location>
    <ligand>
        <name>GTP</name>
        <dbReference type="ChEBI" id="CHEBI:37565"/>
    </ligand>
</feature>
<feature type="binding site" evidence="1">
    <location>
        <begin position="88"/>
        <end position="92"/>
    </location>
    <ligand>
        <name>GTP</name>
        <dbReference type="ChEBI" id="CHEBI:37565"/>
    </ligand>
</feature>
<feature type="binding site" evidence="1">
    <location>
        <begin position="142"/>
        <end position="145"/>
    </location>
    <ligand>
        <name>GTP</name>
        <dbReference type="ChEBI" id="CHEBI:37565"/>
    </ligand>
</feature>
<dbReference type="EMBL" id="CP000353">
    <property type="protein sequence ID" value="ABF12789.1"/>
    <property type="molecule type" value="Genomic_DNA"/>
</dbReference>
<dbReference type="SMR" id="Q1LAN7"/>
<dbReference type="KEGG" id="rme:Rmet_5930"/>
<dbReference type="eggNOG" id="COG0480">
    <property type="taxonomic scope" value="Bacteria"/>
</dbReference>
<dbReference type="HOGENOM" id="CLU_002794_4_1_4"/>
<dbReference type="Proteomes" id="UP000002429">
    <property type="component" value="Plasmid megaplasmid CH34"/>
</dbReference>
<dbReference type="GO" id="GO:0005737">
    <property type="term" value="C:cytoplasm"/>
    <property type="evidence" value="ECO:0007669"/>
    <property type="project" value="UniProtKB-SubCell"/>
</dbReference>
<dbReference type="GO" id="GO:0005525">
    <property type="term" value="F:GTP binding"/>
    <property type="evidence" value="ECO:0007669"/>
    <property type="project" value="UniProtKB-UniRule"/>
</dbReference>
<dbReference type="GO" id="GO:0003924">
    <property type="term" value="F:GTPase activity"/>
    <property type="evidence" value="ECO:0007669"/>
    <property type="project" value="InterPro"/>
</dbReference>
<dbReference type="GO" id="GO:0097216">
    <property type="term" value="F:guanosine tetraphosphate binding"/>
    <property type="evidence" value="ECO:0007669"/>
    <property type="project" value="UniProtKB-ARBA"/>
</dbReference>
<dbReference type="GO" id="GO:0003746">
    <property type="term" value="F:translation elongation factor activity"/>
    <property type="evidence" value="ECO:0007669"/>
    <property type="project" value="UniProtKB-UniRule"/>
</dbReference>
<dbReference type="GO" id="GO:0032790">
    <property type="term" value="P:ribosome disassembly"/>
    <property type="evidence" value="ECO:0007669"/>
    <property type="project" value="TreeGrafter"/>
</dbReference>
<dbReference type="CDD" id="cd01886">
    <property type="entry name" value="EF-G"/>
    <property type="match status" value="1"/>
</dbReference>
<dbReference type="CDD" id="cd16262">
    <property type="entry name" value="EFG_III"/>
    <property type="match status" value="1"/>
</dbReference>
<dbReference type="CDD" id="cd01434">
    <property type="entry name" value="EFG_mtEFG1_IV"/>
    <property type="match status" value="1"/>
</dbReference>
<dbReference type="CDD" id="cd03713">
    <property type="entry name" value="EFG_mtEFG_C"/>
    <property type="match status" value="1"/>
</dbReference>
<dbReference type="CDD" id="cd04088">
    <property type="entry name" value="EFG_mtEFG_II"/>
    <property type="match status" value="1"/>
</dbReference>
<dbReference type="FunFam" id="2.40.30.10:FF:000006">
    <property type="entry name" value="Elongation factor G"/>
    <property type="match status" value="1"/>
</dbReference>
<dbReference type="FunFam" id="3.30.230.10:FF:000003">
    <property type="entry name" value="Elongation factor G"/>
    <property type="match status" value="1"/>
</dbReference>
<dbReference type="FunFam" id="3.30.70.240:FF:000001">
    <property type="entry name" value="Elongation factor G"/>
    <property type="match status" value="1"/>
</dbReference>
<dbReference type="FunFam" id="3.30.70.870:FF:000001">
    <property type="entry name" value="Elongation factor G"/>
    <property type="match status" value="1"/>
</dbReference>
<dbReference type="FunFam" id="3.40.50.300:FF:000029">
    <property type="entry name" value="Elongation factor G"/>
    <property type="match status" value="1"/>
</dbReference>
<dbReference type="Gene3D" id="3.30.230.10">
    <property type="match status" value="1"/>
</dbReference>
<dbReference type="Gene3D" id="3.30.70.240">
    <property type="match status" value="1"/>
</dbReference>
<dbReference type="Gene3D" id="3.30.70.870">
    <property type="entry name" value="Elongation Factor G (Translational Gtpase), domain 3"/>
    <property type="match status" value="1"/>
</dbReference>
<dbReference type="Gene3D" id="3.40.50.300">
    <property type="entry name" value="P-loop containing nucleotide triphosphate hydrolases"/>
    <property type="match status" value="1"/>
</dbReference>
<dbReference type="Gene3D" id="2.40.30.10">
    <property type="entry name" value="Translation factors"/>
    <property type="match status" value="1"/>
</dbReference>
<dbReference type="HAMAP" id="MF_00054_B">
    <property type="entry name" value="EF_G_EF_2_B"/>
    <property type="match status" value="1"/>
</dbReference>
<dbReference type="InterPro" id="IPR041095">
    <property type="entry name" value="EFG_II"/>
</dbReference>
<dbReference type="InterPro" id="IPR009022">
    <property type="entry name" value="EFG_III"/>
</dbReference>
<dbReference type="InterPro" id="IPR035647">
    <property type="entry name" value="EFG_III/V"/>
</dbReference>
<dbReference type="InterPro" id="IPR047872">
    <property type="entry name" value="EFG_IV"/>
</dbReference>
<dbReference type="InterPro" id="IPR035649">
    <property type="entry name" value="EFG_V"/>
</dbReference>
<dbReference type="InterPro" id="IPR000640">
    <property type="entry name" value="EFG_V-like"/>
</dbReference>
<dbReference type="InterPro" id="IPR004161">
    <property type="entry name" value="EFTu-like_2"/>
</dbReference>
<dbReference type="InterPro" id="IPR031157">
    <property type="entry name" value="G_TR_CS"/>
</dbReference>
<dbReference type="InterPro" id="IPR027417">
    <property type="entry name" value="P-loop_NTPase"/>
</dbReference>
<dbReference type="InterPro" id="IPR020568">
    <property type="entry name" value="Ribosomal_Su5_D2-typ_SF"/>
</dbReference>
<dbReference type="InterPro" id="IPR014721">
    <property type="entry name" value="Ribsml_uS5_D2-typ_fold_subgr"/>
</dbReference>
<dbReference type="InterPro" id="IPR005225">
    <property type="entry name" value="Small_GTP-bd"/>
</dbReference>
<dbReference type="InterPro" id="IPR000795">
    <property type="entry name" value="T_Tr_GTP-bd_dom"/>
</dbReference>
<dbReference type="InterPro" id="IPR009000">
    <property type="entry name" value="Transl_B-barrel_sf"/>
</dbReference>
<dbReference type="InterPro" id="IPR004540">
    <property type="entry name" value="Transl_elong_EFG/EF2"/>
</dbReference>
<dbReference type="InterPro" id="IPR005517">
    <property type="entry name" value="Transl_elong_EFG/EF2_IV"/>
</dbReference>
<dbReference type="NCBIfam" id="TIGR00484">
    <property type="entry name" value="EF-G"/>
    <property type="match status" value="1"/>
</dbReference>
<dbReference type="NCBIfam" id="NF009381">
    <property type="entry name" value="PRK12740.1-5"/>
    <property type="match status" value="1"/>
</dbReference>
<dbReference type="NCBIfam" id="TIGR00231">
    <property type="entry name" value="small_GTP"/>
    <property type="match status" value="1"/>
</dbReference>
<dbReference type="PANTHER" id="PTHR43261:SF1">
    <property type="entry name" value="RIBOSOME-RELEASING FACTOR 2, MITOCHONDRIAL"/>
    <property type="match status" value="1"/>
</dbReference>
<dbReference type="PANTHER" id="PTHR43261">
    <property type="entry name" value="TRANSLATION ELONGATION FACTOR G-RELATED"/>
    <property type="match status" value="1"/>
</dbReference>
<dbReference type="Pfam" id="PF00679">
    <property type="entry name" value="EFG_C"/>
    <property type="match status" value="1"/>
</dbReference>
<dbReference type="Pfam" id="PF14492">
    <property type="entry name" value="EFG_III"/>
    <property type="match status" value="1"/>
</dbReference>
<dbReference type="Pfam" id="PF03764">
    <property type="entry name" value="EFG_IV"/>
    <property type="match status" value="1"/>
</dbReference>
<dbReference type="Pfam" id="PF00009">
    <property type="entry name" value="GTP_EFTU"/>
    <property type="match status" value="1"/>
</dbReference>
<dbReference type="Pfam" id="PF03144">
    <property type="entry name" value="GTP_EFTU_D2"/>
    <property type="match status" value="1"/>
</dbReference>
<dbReference type="PRINTS" id="PR00315">
    <property type="entry name" value="ELONGATNFCT"/>
</dbReference>
<dbReference type="SMART" id="SM00838">
    <property type="entry name" value="EFG_C"/>
    <property type="match status" value="1"/>
</dbReference>
<dbReference type="SMART" id="SM00889">
    <property type="entry name" value="EFG_IV"/>
    <property type="match status" value="1"/>
</dbReference>
<dbReference type="SUPFAM" id="SSF54980">
    <property type="entry name" value="EF-G C-terminal domain-like"/>
    <property type="match status" value="2"/>
</dbReference>
<dbReference type="SUPFAM" id="SSF52540">
    <property type="entry name" value="P-loop containing nucleoside triphosphate hydrolases"/>
    <property type="match status" value="1"/>
</dbReference>
<dbReference type="SUPFAM" id="SSF54211">
    <property type="entry name" value="Ribosomal protein S5 domain 2-like"/>
    <property type="match status" value="1"/>
</dbReference>
<dbReference type="SUPFAM" id="SSF50447">
    <property type="entry name" value="Translation proteins"/>
    <property type="match status" value="1"/>
</dbReference>
<dbReference type="PROSITE" id="PS00301">
    <property type="entry name" value="G_TR_1"/>
    <property type="match status" value="1"/>
</dbReference>
<dbReference type="PROSITE" id="PS51722">
    <property type="entry name" value="G_TR_2"/>
    <property type="match status" value="1"/>
</dbReference>
<protein>
    <recommendedName>
        <fullName evidence="1">Elongation factor G 2</fullName>
        <shortName evidence="1">EF-G 2</shortName>
    </recommendedName>
</protein>
<sequence>MPRKTPIERYRNIGISAHIDAGKTTTTERILFYTGVNHKLGEVHDGAATMDWMEQEQERGITITSAATTAFWKGMANNYPEHRINIIDTPGHVDFTIEVERSMRVLDGACMVYDAVGGVQPQSETVWRQANKYSVPRIAFVNKMDRVGADFFRVRTQIADRLKGNAVPIQIPVGAEDHFKGVVDLVKMRAIVWDDDSQGVRFEYTDIPPELVATAKEWHDKMVEAAAEASEELLERYLSGEPLSEEEIKTGLRKRTVAGEIVPMLCGSAFKNKGVQAMLDAVIDYLPSPVDVPAILGHTEDDKEAERHPSDDEPFSALAFKIMTDPFVGQLIFFRVYSGVVNSGDTVYNPVKGKRERLGRILQMHANVRNEIKEVRAGDIAAAVGLKEATTGDTLCDPDKVIILERMSFPEPVISQAVEPKTKADQEKMGIALNRLAQEDPSFRVATDEESGQTIISGMGELHLEILVDRMKREFGVEASVGKPQVAYRETIKGKARDVEGKFIKQSGGRGQYGHVVLDVEPMPQGGGYEFVDAIKGGVVPREFIPAVDKGIRETLETGVLAGYPVVDVKATLVFGSYHDVDSNENAFRMAGSMAFKEGMRRAKPVLLEPMMAVEVETPEEFTGNVMGDLSSRRGMVHGMEDIAGGGGKIVRAEVPLATMFGYSTSLRSLTQGRATFTMEFKHYAEAPANVAEAVINARKVG</sequence>
<name>EFG2_CUPMC</name>
<organism>
    <name type="scientific">Cupriavidus metallidurans (strain ATCC 43123 / DSM 2839 / NBRC 102507 / CH34)</name>
    <name type="common">Ralstonia metallidurans</name>
    <dbReference type="NCBI Taxonomy" id="266264"/>
    <lineage>
        <taxon>Bacteria</taxon>
        <taxon>Pseudomonadati</taxon>
        <taxon>Pseudomonadota</taxon>
        <taxon>Betaproteobacteria</taxon>
        <taxon>Burkholderiales</taxon>
        <taxon>Burkholderiaceae</taxon>
        <taxon>Cupriavidus</taxon>
    </lineage>
</organism>
<accession>Q1LAN7</accession>
<proteinExistence type="inferred from homology"/>
<gene>
    <name evidence="1" type="primary">fusA2</name>
    <name type="ordered locus">Rmet_5930</name>
</gene>
<reference key="1">
    <citation type="journal article" date="2010" name="PLoS ONE">
        <title>The complete genome sequence of Cupriavidus metallidurans strain CH34, a master survivalist in harsh and anthropogenic environments.</title>
        <authorList>
            <person name="Janssen P.J."/>
            <person name="Van Houdt R."/>
            <person name="Moors H."/>
            <person name="Monsieurs P."/>
            <person name="Morin N."/>
            <person name="Michaux A."/>
            <person name="Benotmane M.A."/>
            <person name="Leys N."/>
            <person name="Vallaeys T."/>
            <person name="Lapidus A."/>
            <person name="Monchy S."/>
            <person name="Medigue C."/>
            <person name="Taghavi S."/>
            <person name="McCorkle S."/>
            <person name="Dunn J."/>
            <person name="van der Lelie D."/>
            <person name="Mergeay M."/>
        </authorList>
    </citation>
    <scope>NUCLEOTIDE SEQUENCE [LARGE SCALE GENOMIC DNA]</scope>
    <source>
        <strain>ATCC 43123 / DSM 2839 / NBRC 102507 / CH34</strain>
    </source>
</reference>
<geneLocation type="plasmid">
    <name>megaplasmid CH34</name>
</geneLocation>
<comment type="function">
    <text evidence="1">Catalyzes the GTP-dependent ribosomal translocation step during translation elongation. During this step, the ribosome changes from the pre-translocational (PRE) to the post-translocational (POST) state as the newly formed A-site-bound peptidyl-tRNA and P-site-bound deacylated tRNA move to the P and E sites, respectively. Catalyzes the coordinated movement of the two tRNA molecules, the mRNA and conformational changes in the ribosome.</text>
</comment>
<comment type="subcellular location">
    <subcellularLocation>
        <location evidence="1">Cytoplasm</location>
    </subcellularLocation>
</comment>
<comment type="similarity">
    <text evidence="1">Belongs to the TRAFAC class translation factor GTPase superfamily. Classic translation factor GTPase family. EF-G/EF-2 subfamily.</text>
</comment>
<keyword id="KW-0963">Cytoplasm</keyword>
<keyword id="KW-0251">Elongation factor</keyword>
<keyword id="KW-0342">GTP-binding</keyword>
<keyword id="KW-0547">Nucleotide-binding</keyword>
<keyword id="KW-0614">Plasmid</keyword>
<keyword id="KW-0648">Protein biosynthesis</keyword>
<keyword id="KW-1185">Reference proteome</keyword>